<dbReference type="EC" id="7.1.2.2" evidence="1"/>
<dbReference type="EMBL" id="CP000453">
    <property type="protein sequence ID" value="ABI58209.1"/>
    <property type="molecule type" value="Genomic_DNA"/>
</dbReference>
<dbReference type="RefSeq" id="WP_011630602.1">
    <property type="nucleotide sequence ID" value="NC_008340.1"/>
</dbReference>
<dbReference type="SMR" id="Q0A4M8"/>
<dbReference type="KEGG" id="aeh:Mlg_2869"/>
<dbReference type="eggNOG" id="COG0055">
    <property type="taxonomic scope" value="Bacteria"/>
</dbReference>
<dbReference type="HOGENOM" id="CLU_022398_0_2_6"/>
<dbReference type="OrthoDB" id="9801639at2"/>
<dbReference type="Proteomes" id="UP000001962">
    <property type="component" value="Chromosome"/>
</dbReference>
<dbReference type="GO" id="GO:0005886">
    <property type="term" value="C:plasma membrane"/>
    <property type="evidence" value="ECO:0007669"/>
    <property type="project" value="UniProtKB-SubCell"/>
</dbReference>
<dbReference type="GO" id="GO:0045259">
    <property type="term" value="C:proton-transporting ATP synthase complex"/>
    <property type="evidence" value="ECO:0007669"/>
    <property type="project" value="UniProtKB-KW"/>
</dbReference>
<dbReference type="GO" id="GO:0005524">
    <property type="term" value="F:ATP binding"/>
    <property type="evidence" value="ECO:0007669"/>
    <property type="project" value="UniProtKB-UniRule"/>
</dbReference>
<dbReference type="GO" id="GO:0016887">
    <property type="term" value="F:ATP hydrolysis activity"/>
    <property type="evidence" value="ECO:0007669"/>
    <property type="project" value="InterPro"/>
</dbReference>
<dbReference type="GO" id="GO:0046933">
    <property type="term" value="F:proton-transporting ATP synthase activity, rotational mechanism"/>
    <property type="evidence" value="ECO:0007669"/>
    <property type="project" value="UniProtKB-UniRule"/>
</dbReference>
<dbReference type="CDD" id="cd18110">
    <property type="entry name" value="ATP-synt_F1_beta_C"/>
    <property type="match status" value="1"/>
</dbReference>
<dbReference type="CDD" id="cd18115">
    <property type="entry name" value="ATP-synt_F1_beta_N"/>
    <property type="match status" value="1"/>
</dbReference>
<dbReference type="CDD" id="cd01133">
    <property type="entry name" value="F1-ATPase_beta_CD"/>
    <property type="match status" value="1"/>
</dbReference>
<dbReference type="FunFam" id="1.10.1140.10:FF:000001">
    <property type="entry name" value="ATP synthase subunit beta"/>
    <property type="match status" value="1"/>
</dbReference>
<dbReference type="FunFam" id="3.40.50.300:FF:000004">
    <property type="entry name" value="ATP synthase subunit beta"/>
    <property type="match status" value="1"/>
</dbReference>
<dbReference type="Gene3D" id="2.40.10.170">
    <property type="match status" value="1"/>
</dbReference>
<dbReference type="Gene3D" id="1.10.1140.10">
    <property type="entry name" value="Bovine Mitochondrial F1-atpase, Atp Synthase Beta Chain, Chain D, domain 3"/>
    <property type="match status" value="1"/>
</dbReference>
<dbReference type="Gene3D" id="3.40.50.300">
    <property type="entry name" value="P-loop containing nucleotide triphosphate hydrolases"/>
    <property type="match status" value="1"/>
</dbReference>
<dbReference type="HAMAP" id="MF_01347">
    <property type="entry name" value="ATP_synth_beta_bact"/>
    <property type="match status" value="1"/>
</dbReference>
<dbReference type="InterPro" id="IPR003593">
    <property type="entry name" value="AAA+_ATPase"/>
</dbReference>
<dbReference type="InterPro" id="IPR055190">
    <property type="entry name" value="ATP-synt_VA_C"/>
</dbReference>
<dbReference type="InterPro" id="IPR005722">
    <property type="entry name" value="ATP_synth_F1_bsu"/>
</dbReference>
<dbReference type="InterPro" id="IPR020003">
    <property type="entry name" value="ATPase_a/bsu_AS"/>
</dbReference>
<dbReference type="InterPro" id="IPR050053">
    <property type="entry name" value="ATPase_alpha/beta_chains"/>
</dbReference>
<dbReference type="InterPro" id="IPR004100">
    <property type="entry name" value="ATPase_F1/V1/A1_a/bsu_N"/>
</dbReference>
<dbReference type="InterPro" id="IPR036121">
    <property type="entry name" value="ATPase_F1/V1/A1_a/bsu_N_sf"/>
</dbReference>
<dbReference type="InterPro" id="IPR000194">
    <property type="entry name" value="ATPase_F1/V1/A1_a/bsu_nucl-bd"/>
</dbReference>
<dbReference type="InterPro" id="IPR024034">
    <property type="entry name" value="ATPase_F1/V1_b/a_C"/>
</dbReference>
<dbReference type="InterPro" id="IPR027417">
    <property type="entry name" value="P-loop_NTPase"/>
</dbReference>
<dbReference type="NCBIfam" id="TIGR01039">
    <property type="entry name" value="atpD"/>
    <property type="match status" value="1"/>
</dbReference>
<dbReference type="PANTHER" id="PTHR15184">
    <property type="entry name" value="ATP SYNTHASE"/>
    <property type="match status" value="1"/>
</dbReference>
<dbReference type="PANTHER" id="PTHR15184:SF71">
    <property type="entry name" value="ATP SYNTHASE SUBUNIT BETA, MITOCHONDRIAL"/>
    <property type="match status" value="1"/>
</dbReference>
<dbReference type="Pfam" id="PF00006">
    <property type="entry name" value="ATP-synt_ab"/>
    <property type="match status" value="1"/>
</dbReference>
<dbReference type="Pfam" id="PF02874">
    <property type="entry name" value="ATP-synt_ab_N"/>
    <property type="match status" value="1"/>
</dbReference>
<dbReference type="Pfam" id="PF22919">
    <property type="entry name" value="ATP-synt_VA_C"/>
    <property type="match status" value="1"/>
</dbReference>
<dbReference type="SMART" id="SM00382">
    <property type="entry name" value="AAA"/>
    <property type="match status" value="1"/>
</dbReference>
<dbReference type="SUPFAM" id="SSF47917">
    <property type="entry name" value="C-terminal domain of alpha and beta subunits of F1 ATP synthase"/>
    <property type="match status" value="1"/>
</dbReference>
<dbReference type="SUPFAM" id="SSF50615">
    <property type="entry name" value="N-terminal domain of alpha and beta subunits of F1 ATP synthase"/>
    <property type="match status" value="1"/>
</dbReference>
<dbReference type="SUPFAM" id="SSF52540">
    <property type="entry name" value="P-loop containing nucleoside triphosphate hydrolases"/>
    <property type="match status" value="1"/>
</dbReference>
<dbReference type="PROSITE" id="PS00152">
    <property type="entry name" value="ATPASE_ALPHA_BETA"/>
    <property type="match status" value="1"/>
</dbReference>
<evidence type="ECO:0000255" key="1">
    <source>
        <dbReference type="HAMAP-Rule" id="MF_01347"/>
    </source>
</evidence>
<comment type="function">
    <text evidence="1">Produces ATP from ADP in the presence of a proton gradient across the membrane. The catalytic sites are hosted primarily by the beta subunits.</text>
</comment>
<comment type="catalytic activity">
    <reaction evidence="1">
        <text>ATP + H2O + 4 H(+)(in) = ADP + phosphate + 5 H(+)(out)</text>
        <dbReference type="Rhea" id="RHEA:57720"/>
        <dbReference type="ChEBI" id="CHEBI:15377"/>
        <dbReference type="ChEBI" id="CHEBI:15378"/>
        <dbReference type="ChEBI" id="CHEBI:30616"/>
        <dbReference type="ChEBI" id="CHEBI:43474"/>
        <dbReference type="ChEBI" id="CHEBI:456216"/>
        <dbReference type="EC" id="7.1.2.2"/>
    </reaction>
</comment>
<comment type="subunit">
    <text evidence="1">F-type ATPases have 2 components, CF(1) - the catalytic core - and CF(0) - the membrane proton channel. CF(1) has five subunits: alpha(3), beta(3), gamma(1), delta(1), epsilon(1). CF(0) has three main subunits: a(1), b(2) and c(9-12). The alpha and beta chains form an alternating ring which encloses part of the gamma chain. CF(1) is attached to CF(0) by a central stalk formed by the gamma and epsilon chains, while a peripheral stalk is formed by the delta and b chains.</text>
</comment>
<comment type="subcellular location">
    <subcellularLocation>
        <location evidence="1">Cell inner membrane</location>
        <topology evidence="1">Peripheral membrane protein</topology>
    </subcellularLocation>
</comment>
<comment type="similarity">
    <text evidence="1">Belongs to the ATPase alpha/beta chains family.</text>
</comment>
<feature type="chain" id="PRO_1000055092" description="ATP synthase subunit beta">
    <location>
        <begin position="1"/>
        <end position="458"/>
    </location>
</feature>
<feature type="binding site" evidence="1">
    <location>
        <begin position="148"/>
        <end position="155"/>
    </location>
    <ligand>
        <name>ATP</name>
        <dbReference type="ChEBI" id="CHEBI:30616"/>
    </ligand>
</feature>
<name>ATPB_ALKEH</name>
<protein>
    <recommendedName>
        <fullName evidence="1">ATP synthase subunit beta</fullName>
        <ecNumber evidence="1">7.1.2.2</ecNumber>
    </recommendedName>
    <alternativeName>
        <fullName evidence="1">ATP synthase F1 sector subunit beta</fullName>
    </alternativeName>
    <alternativeName>
        <fullName evidence="1">F-ATPase subunit beta</fullName>
    </alternativeName>
</protein>
<proteinExistence type="inferred from homology"/>
<organism>
    <name type="scientific">Alkalilimnicola ehrlichii (strain ATCC BAA-1101 / DSM 17681 / MLHE-1)</name>
    <dbReference type="NCBI Taxonomy" id="187272"/>
    <lineage>
        <taxon>Bacteria</taxon>
        <taxon>Pseudomonadati</taxon>
        <taxon>Pseudomonadota</taxon>
        <taxon>Gammaproteobacteria</taxon>
        <taxon>Chromatiales</taxon>
        <taxon>Ectothiorhodospiraceae</taxon>
        <taxon>Alkalilimnicola</taxon>
    </lineage>
</organism>
<gene>
    <name evidence="1" type="primary">atpD</name>
    <name type="ordered locus">Mlg_2869</name>
</gene>
<sequence length="458" mass="49575">MSSGKIVQVIGAVVDVEFPQDQVPKIYDALIVDERGLTLEVQQQLGDGVVRTIAMGSSDGLKRSEKVSATGKPISVPVGKGTLGRIMDVLGEPVDEKGAVETEERWGIHRSAPSFAEQAGGAELLETGIKVIDLLCPFAKGGKVGLFGGAGVGKTVNMMELIRNIATEHAGYSVFAGVGERTREGNDFYHEMKDSNVLDKVALVYGQMNEPPGNRLRVALTGLTMAEYFRDEGRDILMFIDNIYRYTLAGTEVSALLGRMPSAVGYQPTLAEEMGKLQERITSTKTGSITSVQAVYVPADDLTDPSPATTFAHLDATVVLARGIAELGIYPAVDPLDSTSRQLDPLVVGEEHYNVARGVQGVLQRYKELRDIIAILGMDELSEDDKLTVARARKIQRFLSQPFFVAEVFTGAPGKYVPLKDTIASFKAILDGEYDHLPEQAFYMVGTVDEAAEKAKNL</sequence>
<reference key="1">
    <citation type="submission" date="2006-08" db="EMBL/GenBank/DDBJ databases">
        <title>Complete sequence of Alkalilimnicola ehrilichei MLHE-1.</title>
        <authorList>
            <person name="Copeland A."/>
            <person name="Lucas S."/>
            <person name="Lapidus A."/>
            <person name="Barry K."/>
            <person name="Detter J.C."/>
            <person name="Glavina del Rio T."/>
            <person name="Hammon N."/>
            <person name="Israni S."/>
            <person name="Dalin E."/>
            <person name="Tice H."/>
            <person name="Pitluck S."/>
            <person name="Sims D."/>
            <person name="Brettin T."/>
            <person name="Bruce D."/>
            <person name="Han C."/>
            <person name="Tapia R."/>
            <person name="Gilna P."/>
            <person name="Schmutz J."/>
            <person name="Larimer F."/>
            <person name="Land M."/>
            <person name="Hauser L."/>
            <person name="Kyrpides N."/>
            <person name="Mikhailova N."/>
            <person name="Oremland R.S."/>
            <person name="Hoeft S.E."/>
            <person name="Switzer-Blum J."/>
            <person name="Kulp T."/>
            <person name="King G."/>
            <person name="Tabita R."/>
            <person name="Witte B."/>
            <person name="Santini J.M."/>
            <person name="Basu P."/>
            <person name="Hollibaugh J.T."/>
            <person name="Xie G."/>
            <person name="Stolz J.F."/>
            <person name="Richardson P."/>
        </authorList>
    </citation>
    <scope>NUCLEOTIDE SEQUENCE [LARGE SCALE GENOMIC DNA]</scope>
    <source>
        <strain>ATCC BAA-1101 / DSM 17681 / MLHE-1</strain>
    </source>
</reference>
<accession>Q0A4M8</accession>
<keyword id="KW-0066">ATP synthesis</keyword>
<keyword id="KW-0067">ATP-binding</keyword>
<keyword id="KW-0997">Cell inner membrane</keyword>
<keyword id="KW-1003">Cell membrane</keyword>
<keyword id="KW-0139">CF(1)</keyword>
<keyword id="KW-0375">Hydrogen ion transport</keyword>
<keyword id="KW-0406">Ion transport</keyword>
<keyword id="KW-0472">Membrane</keyword>
<keyword id="KW-0547">Nucleotide-binding</keyword>
<keyword id="KW-1185">Reference proteome</keyword>
<keyword id="KW-1278">Translocase</keyword>
<keyword id="KW-0813">Transport</keyword>